<gene>
    <name evidence="1" type="primary">plsY</name>
    <name type="ordered locus">Erum0150</name>
    <name type="ordered locus">ERWE_CDS_00020</name>
</gene>
<dbReference type="EC" id="2.3.1.275" evidence="1"/>
<dbReference type="EMBL" id="CR767821">
    <property type="protein sequence ID" value="CAH57722.1"/>
    <property type="molecule type" value="Genomic_DNA"/>
</dbReference>
<dbReference type="EMBL" id="CR925678">
    <property type="protein sequence ID" value="CAI26496.1"/>
    <property type="molecule type" value="Genomic_DNA"/>
</dbReference>
<dbReference type="RefSeq" id="WP_011154698.1">
    <property type="nucleotide sequence ID" value="NC_005295.2"/>
</dbReference>
<dbReference type="SMR" id="Q5HCG2"/>
<dbReference type="GeneID" id="33057852"/>
<dbReference type="KEGG" id="eru:Erum0150"/>
<dbReference type="KEGG" id="erw:ERWE_CDS_00020"/>
<dbReference type="eggNOG" id="COG0344">
    <property type="taxonomic scope" value="Bacteria"/>
</dbReference>
<dbReference type="HOGENOM" id="CLU_081254_4_0_5"/>
<dbReference type="UniPathway" id="UPA00085"/>
<dbReference type="Proteomes" id="UP000001021">
    <property type="component" value="Chromosome"/>
</dbReference>
<dbReference type="GO" id="GO:0005886">
    <property type="term" value="C:plasma membrane"/>
    <property type="evidence" value="ECO:0007669"/>
    <property type="project" value="UniProtKB-SubCell"/>
</dbReference>
<dbReference type="GO" id="GO:0043772">
    <property type="term" value="F:acyl-phosphate glycerol-3-phosphate acyltransferase activity"/>
    <property type="evidence" value="ECO:0007669"/>
    <property type="project" value="UniProtKB-UniRule"/>
</dbReference>
<dbReference type="GO" id="GO:0008654">
    <property type="term" value="P:phospholipid biosynthetic process"/>
    <property type="evidence" value="ECO:0007669"/>
    <property type="project" value="UniProtKB-UniRule"/>
</dbReference>
<dbReference type="HAMAP" id="MF_01043">
    <property type="entry name" value="PlsY"/>
    <property type="match status" value="1"/>
</dbReference>
<dbReference type="InterPro" id="IPR003811">
    <property type="entry name" value="G3P_acylTferase_PlsY"/>
</dbReference>
<dbReference type="NCBIfam" id="TIGR00023">
    <property type="entry name" value="glycerol-3-phosphate 1-O-acyltransferase PlsY"/>
    <property type="match status" value="1"/>
</dbReference>
<dbReference type="PANTHER" id="PTHR30309:SF0">
    <property type="entry name" value="GLYCEROL-3-PHOSPHATE ACYLTRANSFERASE-RELATED"/>
    <property type="match status" value="1"/>
</dbReference>
<dbReference type="PANTHER" id="PTHR30309">
    <property type="entry name" value="INNER MEMBRANE PROTEIN YGIH"/>
    <property type="match status" value="1"/>
</dbReference>
<dbReference type="Pfam" id="PF02660">
    <property type="entry name" value="G3P_acyltransf"/>
    <property type="match status" value="1"/>
</dbReference>
<dbReference type="SMART" id="SM01207">
    <property type="entry name" value="G3P_acyltransf"/>
    <property type="match status" value="1"/>
</dbReference>
<feature type="chain" id="PRO_0000188365" description="Glycerol-3-phosphate acyltransferase">
    <location>
        <begin position="1"/>
        <end position="195"/>
    </location>
</feature>
<feature type="transmembrane region" description="Helical" evidence="1">
    <location>
        <begin position="7"/>
        <end position="27"/>
    </location>
</feature>
<feature type="transmembrane region" description="Helical" evidence="1">
    <location>
        <begin position="52"/>
        <end position="72"/>
    </location>
</feature>
<feature type="transmembrane region" description="Helical" evidence="1">
    <location>
        <begin position="80"/>
        <end position="100"/>
    </location>
</feature>
<feature type="transmembrane region" description="Helical" evidence="1">
    <location>
        <begin position="113"/>
        <end position="133"/>
    </location>
</feature>
<feature type="transmembrane region" description="Helical" evidence="1">
    <location>
        <begin position="147"/>
        <end position="167"/>
    </location>
</feature>
<sequence>MDFQVVIFILCYLIGSIPFGFILSYVIGIGDIRKTGSGNIGATNVFRKNKKLALLTLLLDALKSFICVAIAQKYNIDNTILFLAALFAIIGHMFPVYLFFKGGKGVAPLLGSLIFIDYRVAVCFLTFWIICFLLCKYASLSSIVSTLIALLFICTCYTIVQSVIFTITALLIITQHTDNIIRMLNKSENKINLKL</sequence>
<keyword id="KW-0997">Cell inner membrane</keyword>
<keyword id="KW-1003">Cell membrane</keyword>
<keyword id="KW-0444">Lipid biosynthesis</keyword>
<keyword id="KW-0443">Lipid metabolism</keyword>
<keyword id="KW-0472">Membrane</keyword>
<keyword id="KW-0594">Phospholipid biosynthesis</keyword>
<keyword id="KW-1208">Phospholipid metabolism</keyword>
<keyword id="KW-0808">Transferase</keyword>
<keyword id="KW-0812">Transmembrane</keyword>
<keyword id="KW-1133">Transmembrane helix</keyword>
<evidence type="ECO:0000255" key="1">
    <source>
        <dbReference type="HAMAP-Rule" id="MF_01043"/>
    </source>
</evidence>
<reference key="1">
    <citation type="journal article" date="2005" name="Proc. Natl. Acad. Sci. U.S.A.">
        <title>The genome of the heartwater agent Ehrlichia ruminantium contains multiple tandem repeats of actively variable copy number.</title>
        <authorList>
            <person name="Collins N.E."/>
            <person name="Liebenberg J."/>
            <person name="de Villiers E.P."/>
            <person name="Brayton K.A."/>
            <person name="Louw E."/>
            <person name="Pretorius A."/>
            <person name="Faber F.E."/>
            <person name="van Heerden H."/>
            <person name="Josemans A."/>
            <person name="van Kleef M."/>
            <person name="Steyn H.C."/>
            <person name="van Strijp M.F."/>
            <person name="Zweygarth E."/>
            <person name="Jongejan F."/>
            <person name="Maillard J.C."/>
            <person name="Berthier D."/>
            <person name="Botha M."/>
            <person name="Joubert F."/>
            <person name="Corton C.H."/>
            <person name="Thomson N.R."/>
            <person name="Allsopp M.T."/>
            <person name="Allsopp B.A."/>
        </authorList>
    </citation>
    <scope>NUCLEOTIDE SEQUENCE [LARGE SCALE GENOMIC DNA]</scope>
    <source>
        <strain>Welgevonden</strain>
    </source>
</reference>
<reference key="2">
    <citation type="journal article" date="2006" name="J. Bacteriol.">
        <title>Comparative genomic analysis of three strains of Ehrlichia ruminantium reveals an active process of genome size plasticity.</title>
        <authorList>
            <person name="Frutos R."/>
            <person name="Viari A."/>
            <person name="Ferraz C."/>
            <person name="Morgat A."/>
            <person name="Eychenie S."/>
            <person name="Kandassamy Y."/>
            <person name="Chantal I."/>
            <person name="Bensaid A."/>
            <person name="Coissac E."/>
            <person name="Vachiery N."/>
            <person name="Demaille J."/>
            <person name="Martinez D."/>
        </authorList>
    </citation>
    <scope>NUCLEOTIDE SEQUENCE [LARGE SCALE GENOMIC DNA]</scope>
    <source>
        <strain>Welgevonden</strain>
    </source>
</reference>
<comment type="function">
    <text evidence="1">Catalyzes the transfer of an acyl group from acyl-phosphate (acyl-PO(4)) to glycerol-3-phosphate (G3P) to form lysophosphatidic acid (LPA). This enzyme utilizes acyl-phosphate as fatty acyl donor, but not acyl-CoA or acyl-ACP.</text>
</comment>
<comment type="catalytic activity">
    <reaction evidence="1">
        <text>an acyl phosphate + sn-glycerol 3-phosphate = a 1-acyl-sn-glycero-3-phosphate + phosphate</text>
        <dbReference type="Rhea" id="RHEA:34075"/>
        <dbReference type="ChEBI" id="CHEBI:43474"/>
        <dbReference type="ChEBI" id="CHEBI:57597"/>
        <dbReference type="ChEBI" id="CHEBI:57970"/>
        <dbReference type="ChEBI" id="CHEBI:59918"/>
        <dbReference type="EC" id="2.3.1.275"/>
    </reaction>
</comment>
<comment type="pathway">
    <text evidence="1">Lipid metabolism; phospholipid metabolism.</text>
</comment>
<comment type="subunit">
    <text evidence="1">Probably interacts with PlsX.</text>
</comment>
<comment type="subcellular location">
    <subcellularLocation>
        <location evidence="1">Cell inner membrane</location>
        <topology evidence="1">Multi-pass membrane protein</topology>
    </subcellularLocation>
</comment>
<comment type="similarity">
    <text evidence="1">Belongs to the PlsY family.</text>
</comment>
<protein>
    <recommendedName>
        <fullName evidence="1">Glycerol-3-phosphate acyltransferase</fullName>
    </recommendedName>
    <alternativeName>
        <fullName evidence="1">Acyl-PO4 G3P acyltransferase</fullName>
    </alternativeName>
    <alternativeName>
        <fullName evidence="1">Acyl-phosphate--glycerol-3-phosphate acyltransferase</fullName>
    </alternativeName>
    <alternativeName>
        <fullName evidence="1">G3P acyltransferase</fullName>
        <shortName evidence="1">GPAT</shortName>
        <ecNumber evidence="1">2.3.1.275</ecNumber>
    </alternativeName>
    <alternativeName>
        <fullName evidence="1">Lysophosphatidic acid synthase</fullName>
        <shortName evidence="1">LPA synthase</shortName>
    </alternativeName>
</protein>
<proteinExistence type="inferred from homology"/>
<accession>Q5HCG2</accession>
<accession>Q5FCF6</accession>
<organism>
    <name type="scientific">Ehrlichia ruminantium (strain Welgevonden)</name>
    <dbReference type="NCBI Taxonomy" id="254945"/>
    <lineage>
        <taxon>Bacteria</taxon>
        <taxon>Pseudomonadati</taxon>
        <taxon>Pseudomonadota</taxon>
        <taxon>Alphaproteobacteria</taxon>
        <taxon>Rickettsiales</taxon>
        <taxon>Anaplasmataceae</taxon>
        <taxon>Ehrlichia</taxon>
    </lineage>
</organism>
<name>PLSY_EHRRW</name>